<keyword id="KW-0025">Alternative splicing</keyword>
<keyword id="KW-1185">Reference proteome</keyword>
<gene>
    <name type="ordered locus">At5g56700</name>
    <name type="ORF">MIK19.15</name>
</gene>
<sequence length="398" mass="45842">MAKISDLSDELLVKILSFLPTKEAVSTSCLSKQWEFLWMWLSKLEFYFSDGSESACLRDFIAKNLPLHKAPIIESLRFCSFFGSLQPKDLKSWVRIAVSRCVRELSISLHDTTAAVSLPSSLYTCKSLVTLKLYGKKVLLDVPRTVFLPSLKTLQLERLRYSDEDSLRLLLSYCPVLEDLSIVREDYDNLRALVVIVPSLQRLSLEIPGNCSSDGYVIVTPSLKYFKVVDYRESMSYLIEQMPELEEADIVVLQYPEKLLESVTFFKRLSIRVIFNTYTETVYRDGIVFNRLENLKLCICNGDWSKLLIQFLKDSPNLRVLNLLVDDYPSSLGDYEPVRWKNNKSSVPKCLLESLETFEFAGYIGTPEERDFLSYIFKHARCLKSSSILSRPERYHGI</sequence>
<accession>Q9FJU2</accession>
<accession>F4K924</accession>
<evidence type="ECO:0000305" key="1"/>
<reference key="1">
    <citation type="journal article" date="1998" name="DNA Res.">
        <title>Structural analysis of Arabidopsis thaliana chromosome 5. VI. Sequence features of the regions of 1,367,185 bp covered by 19 physically assigned P1 and TAC clones.</title>
        <authorList>
            <person name="Kotani H."/>
            <person name="Nakamura Y."/>
            <person name="Sato S."/>
            <person name="Asamizu E."/>
            <person name="Kaneko T."/>
            <person name="Miyajima N."/>
            <person name="Tabata S."/>
        </authorList>
    </citation>
    <scope>NUCLEOTIDE SEQUENCE [LARGE SCALE GENOMIC DNA]</scope>
    <source>
        <strain>cv. Columbia</strain>
    </source>
</reference>
<reference key="2">
    <citation type="journal article" date="2017" name="Plant J.">
        <title>Araport11: a complete reannotation of the Arabidopsis thaliana reference genome.</title>
        <authorList>
            <person name="Cheng C.Y."/>
            <person name="Krishnakumar V."/>
            <person name="Chan A.P."/>
            <person name="Thibaud-Nissen F."/>
            <person name="Schobel S."/>
            <person name="Town C.D."/>
        </authorList>
    </citation>
    <scope>GENOME REANNOTATION</scope>
    <source>
        <strain>cv. Columbia</strain>
    </source>
</reference>
<comment type="alternative products">
    <event type="alternative splicing"/>
    <isoform>
        <id>Q9FJU2-1</id>
        <name>1</name>
        <sequence type="displayed"/>
    </isoform>
    <isoform>
        <id>Q9FJU2-2</id>
        <name>2</name>
        <sequence type="described" ref="VSP_042249"/>
    </isoform>
</comment>
<comment type="sequence caution" evidence="1">
    <conflict type="erroneous gene model prediction">
        <sequence resource="EMBL-CDS" id="BAB09888"/>
    </conflict>
</comment>
<comment type="sequence caution" evidence="1">
    <conflict type="frameshift">
        <sequence resource="EMBL-CDS" id="BAB09888"/>
    </conflict>
</comment>
<proteinExistence type="evidence at transcript level"/>
<feature type="chain" id="PRO_0000396024" description="Putative FBD-associated F-box protein At5g56700">
    <location>
        <begin position="1"/>
        <end position="398"/>
    </location>
</feature>
<feature type="domain" description="F-box">
    <location>
        <begin position="1"/>
        <end position="47"/>
    </location>
</feature>
<feature type="domain" description="FBD">
    <location>
        <begin position="340"/>
        <end position="388"/>
    </location>
</feature>
<feature type="splice variant" id="VSP_042249" description="In isoform 2." evidence="1">
    <original>CLSKQWEFLWMWLSKLEFYFSDGSESACLRDFIAKNLPLHKAPIIESLRFCSFFGSLQPK</original>
    <variation>VCRNNGSFFGCGCPNSSSTLVM</variation>
    <location>
        <begin position="29"/>
        <end position="88"/>
    </location>
</feature>
<organism>
    <name type="scientific">Arabidopsis thaliana</name>
    <name type="common">Mouse-ear cress</name>
    <dbReference type="NCBI Taxonomy" id="3702"/>
    <lineage>
        <taxon>Eukaryota</taxon>
        <taxon>Viridiplantae</taxon>
        <taxon>Streptophyta</taxon>
        <taxon>Embryophyta</taxon>
        <taxon>Tracheophyta</taxon>
        <taxon>Spermatophyta</taxon>
        <taxon>Magnoliopsida</taxon>
        <taxon>eudicotyledons</taxon>
        <taxon>Gunneridae</taxon>
        <taxon>Pentapetalae</taxon>
        <taxon>rosids</taxon>
        <taxon>malvids</taxon>
        <taxon>Brassicales</taxon>
        <taxon>Brassicaceae</taxon>
        <taxon>Camelineae</taxon>
        <taxon>Arabidopsis</taxon>
    </lineage>
</organism>
<name>FBD37_ARATH</name>
<dbReference type="EMBL" id="AB013392">
    <property type="protein sequence ID" value="BAB09888.1"/>
    <property type="status" value="ALT_SEQ"/>
    <property type="molecule type" value="Genomic_DNA"/>
</dbReference>
<dbReference type="EMBL" id="CP002688">
    <property type="status" value="NOT_ANNOTATED_CDS"/>
    <property type="molecule type" value="Genomic_DNA"/>
</dbReference>
<dbReference type="GlyGen" id="Q9FJU2">
    <property type="glycosylation" value="1 site"/>
</dbReference>
<dbReference type="Araport" id="AT5G56700"/>
<dbReference type="TAIR" id="AT5G56700"/>
<dbReference type="InParanoid" id="Q9FJU2"/>
<dbReference type="PhylomeDB" id="Q9FJU2"/>
<dbReference type="PRO" id="PR:Q9FJU2"/>
<dbReference type="Proteomes" id="UP000006548">
    <property type="component" value="Chromosome 5"/>
</dbReference>
<dbReference type="ExpressionAtlas" id="Q9FJU2">
    <property type="expression patterns" value="baseline and differential"/>
</dbReference>
<dbReference type="CDD" id="cd22160">
    <property type="entry name" value="F-box_AtFBL13-like"/>
    <property type="match status" value="1"/>
</dbReference>
<dbReference type="Gene3D" id="1.20.1280.50">
    <property type="match status" value="1"/>
</dbReference>
<dbReference type="Gene3D" id="3.80.10.10">
    <property type="entry name" value="Ribonuclease Inhibitor"/>
    <property type="match status" value="1"/>
</dbReference>
<dbReference type="InterPro" id="IPR036047">
    <property type="entry name" value="F-box-like_dom_sf"/>
</dbReference>
<dbReference type="InterPro" id="IPR053781">
    <property type="entry name" value="F-box_AtFBL13-like"/>
</dbReference>
<dbReference type="InterPro" id="IPR001810">
    <property type="entry name" value="F-box_dom"/>
</dbReference>
<dbReference type="InterPro" id="IPR006566">
    <property type="entry name" value="FBD"/>
</dbReference>
<dbReference type="InterPro" id="IPR050232">
    <property type="entry name" value="FBL13/AtMIF1-like"/>
</dbReference>
<dbReference type="InterPro" id="IPR032675">
    <property type="entry name" value="LRR_dom_sf"/>
</dbReference>
<dbReference type="InterPro" id="IPR055411">
    <property type="entry name" value="LRR_FXL15/At3g58940/PEG3-like"/>
</dbReference>
<dbReference type="PANTHER" id="PTHR31900">
    <property type="entry name" value="F-BOX/RNI SUPERFAMILY PROTEIN-RELATED"/>
    <property type="match status" value="1"/>
</dbReference>
<dbReference type="PANTHER" id="PTHR31900:SF28">
    <property type="entry name" value="FBD DOMAIN-CONTAINING PROTEIN"/>
    <property type="match status" value="1"/>
</dbReference>
<dbReference type="Pfam" id="PF00646">
    <property type="entry name" value="F-box"/>
    <property type="match status" value="1"/>
</dbReference>
<dbReference type="Pfam" id="PF08387">
    <property type="entry name" value="FBD"/>
    <property type="match status" value="1"/>
</dbReference>
<dbReference type="Pfam" id="PF24758">
    <property type="entry name" value="LRR_At5g56370"/>
    <property type="match status" value="1"/>
</dbReference>
<dbReference type="SMART" id="SM00256">
    <property type="entry name" value="FBOX"/>
    <property type="match status" value="1"/>
</dbReference>
<dbReference type="SUPFAM" id="SSF81383">
    <property type="entry name" value="F-box domain"/>
    <property type="match status" value="1"/>
</dbReference>
<dbReference type="SUPFAM" id="SSF52047">
    <property type="entry name" value="RNI-like"/>
    <property type="match status" value="1"/>
</dbReference>
<protein>
    <recommendedName>
        <fullName>Putative FBD-associated F-box protein At5g56700</fullName>
    </recommendedName>
</protein>